<keyword id="KW-0450">Lipoyl</keyword>
<gene>
    <name evidence="1" type="primary">gcvH</name>
    <name type="ordered locus">Mmwyl1_2284</name>
</gene>
<reference key="1">
    <citation type="submission" date="2007-06" db="EMBL/GenBank/DDBJ databases">
        <title>Complete sequence of Marinomonas sp. MWYL1.</title>
        <authorList>
            <consortium name="US DOE Joint Genome Institute"/>
            <person name="Copeland A."/>
            <person name="Lucas S."/>
            <person name="Lapidus A."/>
            <person name="Barry K."/>
            <person name="Glavina del Rio T."/>
            <person name="Dalin E."/>
            <person name="Tice H."/>
            <person name="Pitluck S."/>
            <person name="Kiss H."/>
            <person name="Brettin T."/>
            <person name="Bruce D."/>
            <person name="Detter J.C."/>
            <person name="Han C."/>
            <person name="Schmutz J."/>
            <person name="Larimer F."/>
            <person name="Land M."/>
            <person name="Hauser L."/>
            <person name="Kyrpides N."/>
            <person name="Kim E."/>
            <person name="Johnston A.W.B."/>
            <person name="Todd J.D."/>
            <person name="Rogers R."/>
            <person name="Wexler M."/>
            <person name="Bond P.L."/>
            <person name="Li Y."/>
            <person name="Richardson P."/>
        </authorList>
    </citation>
    <scope>NUCLEOTIDE SEQUENCE [LARGE SCALE GENOMIC DNA]</scope>
    <source>
        <strain>MWYL1</strain>
    </source>
</reference>
<protein>
    <recommendedName>
        <fullName evidence="1">Glycine cleavage system H protein</fullName>
    </recommendedName>
</protein>
<evidence type="ECO:0000255" key="1">
    <source>
        <dbReference type="HAMAP-Rule" id="MF_00272"/>
    </source>
</evidence>
<evidence type="ECO:0000255" key="2">
    <source>
        <dbReference type="PROSITE-ProRule" id="PRU01066"/>
    </source>
</evidence>
<organism>
    <name type="scientific">Marinomonas sp. (strain MWYL1)</name>
    <dbReference type="NCBI Taxonomy" id="400668"/>
    <lineage>
        <taxon>Bacteria</taxon>
        <taxon>Pseudomonadati</taxon>
        <taxon>Pseudomonadota</taxon>
        <taxon>Gammaproteobacteria</taxon>
        <taxon>Oceanospirillales</taxon>
        <taxon>Oceanospirillaceae</taxon>
        <taxon>Marinomonas</taxon>
    </lineage>
</organism>
<feature type="chain" id="PRO_1000078732" description="Glycine cleavage system H protein">
    <location>
        <begin position="1"/>
        <end position="127"/>
    </location>
</feature>
<feature type="domain" description="Lipoyl-binding" evidence="2">
    <location>
        <begin position="24"/>
        <end position="106"/>
    </location>
</feature>
<feature type="modified residue" description="N6-lipoyllysine" evidence="1">
    <location>
        <position position="65"/>
    </location>
</feature>
<sequence>MSTIPENLKYADSHEWVLDNGDGTVTVGITDHAQDLLGDVVYVELPEVGTEVTATEQFSLVESVKAASDIYAPVNGEVIEVNDALNDAPELINEAPFEGAWIAKIKLSNAADLDKLLDAAGYSATIA</sequence>
<dbReference type="EMBL" id="CP000749">
    <property type="protein sequence ID" value="ABR71206.1"/>
    <property type="molecule type" value="Genomic_DNA"/>
</dbReference>
<dbReference type="SMR" id="A6VXM7"/>
<dbReference type="STRING" id="400668.Mmwyl1_2284"/>
<dbReference type="KEGG" id="mmw:Mmwyl1_2284"/>
<dbReference type="eggNOG" id="COG0509">
    <property type="taxonomic scope" value="Bacteria"/>
</dbReference>
<dbReference type="HOGENOM" id="CLU_097408_2_1_6"/>
<dbReference type="OrthoDB" id="9796712at2"/>
<dbReference type="GO" id="GO:0005829">
    <property type="term" value="C:cytosol"/>
    <property type="evidence" value="ECO:0007669"/>
    <property type="project" value="TreeGrafter"/>
</dbReference>
<dbReference type="GO" id="GO:0005960">
    <property type="term" value="C:glycine cleavage complex"/>
    <property type="evidence" value="ECO:0007669"/>
    <property type="project" value="InterPro"/>
</dbReference>
<dbReference type="GO" id="GO:0019464">
    <property type="term" value="P:glycine decarboxylation via glycine cleavage system"/>
    <property type="evidence" value="ECO:0007669"/>
    <property type="project" value="UniProtKB-UniRule"/>
</dbReference>
<dbReference type="CDD" id="cd06848">
    <property type="entry name" value="GCS_H"/>
    <property type="match status" value="1"/>
</dbReference>
<dbReference type="Gene3D" id="2.40.50.100">
    <property type="match status" value="1"/>
</dbReference>
<dbReference type="HAMAP" id="MF_00272">
    <property type="entry name" value="GcvH"/>
    <property type="match status" value="1"/>
</dbReference>
<dbReference type="InterPro" id="IPR003016">
    <property type="entry name" value="2-oxoA_DH_lipoyl-BS"/>
</dbReference>
<dbReference type="InterPro" id="IPR000089">
    <property type="entry name" value="Biotin_lipoyl"/>
</dbReference>
<dbReference type="InterPro" id="IPR002930">
    <property type="entry name" value="GCV_H"/>
</dbReference>
<dbReference type="InterPro" id="IPR033753">
    <property type="entry name" value="GCV_H/Fam206"/>
</dbReference>
<dbReference type="InterPro" id="IPR017453">
    <property type="entry name" value="GCV_H_sub"/>
</dbReference>
<dbReference type="InterPro" id="IPR011053">
    <property type="entry name" value="Single_hybrid_motif"/>
</dbReference>
<dbReference type="NCBIfam" id="TIGR00527">
    <property type="entry name" value="gcvH"/>
    <property type="match status" value="1"/>
</dbReference>
<dbReference type="NCBIfam" id="NF002270">
    <property type="entry name" value="PRK01202.1"/>
    <property type="match status" value="1"/>
</dbReference>
<dbReference type="PANTHER" id="PTHR11715">
    <property type="entry name" value="GLYCINE CLEAVAGE SYSTEM H PROTEIN"/>
    <property type="match status" value="1"/>
</dbReference>
<dbReference type="PANTHER" id="PTHR11715:SF3">
    <property type="entry name" value="GLYCINE CLEAVAGE SYSTEM H PROTEIN-RELATED"/>
    <property type="match status" value="1"/>
</dbReference>
<dbReference type="Pfam" id="PF01597">
    <property type="entry name" value="GCV_H"/>
    <property type="match status" value="1"/>
</dbReference>
<dbReference type="SUPFAM" id="SSF51230">
    <property type="entry name" value="Single hybrid motif"/>
    <property type="match status" value="1"/>
</dbReference>
<dbReference type="PROSITE" id="PS50968">
    <property type="entry name" value="BIOTINYL_LIPOYL"/>
    <property type="match status" value="1"/>
</dbReference>
<dbReference type="PROSITE" id="PS00189">
    <property type="entry name" value="LIPOYL"/>
    <property type="match status" value="1"/>
</dbReference>
<accession>A6VXM7</accession>
<proteinExistence type="inferred from homology"/>
<comment type="function">
    <text evidence="1">The glycine cleavage system catalyzes the degradation of glycine. The H protein shuttles the methylamine group of glycine from the P protein to the T protein.</text>
</comment>
<comment type="cofactor">
    <cofactor evidence="1">
        <name>(R)-lipoate</name>
        <dbReference type="ChEBI" id="CHEBI:83088"/>
    </cofactor>
    <text evidence="1">Binds 1 lipoyl cofactor covalently.</text>
</comment>
<comment type="subunit">
    <text evidence="1">The glycine cleavage system is composed of four proteins: P, T, L and H.</text>
</comment>
<comment type="similarity">
    <text evidence="1">Belongs to the GcvH family.</text>
</comment>
<name>GCSH_MARMS</name>